<geneLocation type="chloroplast"/>
<protein>
    <recommendedName>
        <fullName>Photosystem I iron-sulfur center</fullName>
        <ecNumber>1.97.1.12</ecNumber>
    </recommendedName>
    <alternativeName>
        <fullName>9 kDa polypeptide</fullName>
    </alternativeName>
    <alternativeName>
        <fullName>PSI-C</fullName>
    </alternativeName>
    <alternativeName>
        <fullName>Photosystem I subunit VII</fullName>
    </alternativeName>
    <alternativeName>
        <fullName>PsaC</fullName>
    </alternativeName>
</protein>
<evidence type="ECO:0000250" key="1"/>
<evidence type="ECO:0000269" key="2">
    <source>
    </source>
</evidence>
<evidence type="ECO:0000269" key="3">
    <source>
    </source>
</evidence>
<name>PSAC_ANTAG</name>
<accession>Q85AC1</accession>
<organism>
    <name type="scientific">Anthoceros angustus</name>
    <name type="common">Hornwort</name>
    <name type="synonym">Anthoceros formosae</name>
    <dbReference type="NCBI Taxonomy" id="48387"/>
    <lineage>
        <taxon>Eukaryota</taxon>
        <taxon>Viridiplantae</taxon>
        <taxon>Streptophyta</taxon>
        <taxon>Embryophyta</taxon>
        <taxon>Anthocerotophyta</taxon>
        <taxon>Anthocerotopsida</taxon>
        <taxon>Anthocerotidae</taxon>
        <taxon>Anthocerotales</taxon>
        <taxon>Anthocerotaceae</taxon>
        <taxon>Anthoceros</taxon>
    </lineage>
</organism>
<reference key="1">
    <citation type="journal article" date="2003" name="Nucleic Acids Res.">
        <title>The complete nucleotide sequence of the hornwort (Anthoceros formosae) chloroplast genome: insight into the earliest land plants.</title>
        <authorList>
            <person name="Kugita M."/>
            <person name="Kaneko A."/>
            <person name="Yamamoto Y."/>
            <person name="Takeya Y."/>
            <person name="Matsumoto T."/>
            <person name="Yoshinaga K."/>
        </authorList>
    </citation>
    <scope>NUCLEOTIDE SEQUENCE [LARGE SCALE GENOMIC DNA]</scope>
    <scope>RNA EDITING</scope>
</reference>
<reference key="2">
    <citation type="journal article" date="2003" name="Nucleic Acids Res.">
        <title>RNA editing in hornwort chloroplasts makes more than half the genes functional.</title>
        <authorList>
            <person name="Kugita M."/>
            <person name="Yamamoto Y."/>
            <person name="Fujikawa T."/>
            <person name="Matsumoto T."/>
            <person name="Yoshinaga K."/>
        </authorList>
    </citation>
    <scope>NUCLEOTIDE SEQUENCE [MRNA]</scope>
    <scope>RNA EDITING</scope>
    <source>
        <tissue>Thallus</tissue>
    </source>
</reference>
<proteinExistence type="evidence at transcript level"/>
<dbReference type="EC" id="1.97.1.12"/>
<dbReference type="EMBL" id="AB086179">
    <property type="protein sequence ID" value="BAC55402.1"/>
    <property type="molecule type" value="Genomic_DNA"/>
</dbReference>
<dbReference type="EMBL" id="AB087486">
    <property type="protein sequence ID" value="BAC55502.1"/>
    <property type="molecule type" value="mRNA"/>
</dbReference>
<dbReference type="RefSeq" id="NP_777465.1">
    <property type="nucleotide sequence ID" value="NC_004543.1"/>
</dbReference>
<dbReference type="SMR" id="Q85AC1"/>
<dbReference type="GeneID" id="2553392"/>
<dbReference type="GO" id="GO:0009535">
    <property type="term" value="C:chloroplast thylakoid membrane"/>
    <property type="evidence" value="ECO:0007669"/>
    <property type="project" value="UniProtKB-SubCell"/>
</dbReference>
<dbReference type="GO" id="GO:0009522">
    <property type="term" value="C:photosystem I"/>
    <property type="evidence" value="ECO:0007669"/>
    <property type="project" value="UniProtKB-KW"/>
</dbReference>
<dbReference type="GO" id="GO:0051539">
    <property type="term" value="F:4 iron, 4 sulfur cluster binding"/>
    <property type="evidence" value="ECO:0007669"/>
    <property type="project" value="UniProtKB-KW"/>
</dbReference>
<dbReference type="GO" id="GO:0009055">
    <property type="term" value="F:electron transfer activity"/>
    <property type="evidence" value="ECO:0007669"/>
    <property type="project" value="UniProtKB-UniRule"/>
</dbReference>
<dbReference type="GO" id="GO:0046872">
    <property type="term" value="F:metal ion binding"/>
    <property type="evidence" value="ECO:0007669"/>
    <property type="project" value="UniProtKB-KW"/>
</dbReference>
<dbReference type="GO" id="GO:0016491">
    <property type="term" value="F:oxidoreductase activity"/>
    <property type="evidence" value="ECO:0007669"/>
    <property type="project" value="UniProtKB-KW"/>
</dbReference>
<dbReference type="GO" id="GO:0009773">
    <property type="term" value="P:photosynthetic electron transport in photosystem I"/>
    <property type="evidence" value="ECO:0007669"/>
    <property type="project" value="InterPro"/>
</dbReference>
<dbReference type="FunFam" id="3.30.70.20:FF:000001">
    <property type="entry name" value="Photosystem I iron-sulfur center"/>
    <property type="match status" value="1"/>
</dbReference>
<dbReference type="Gene3D" id="3.30.70.20">
    <property type="match status" value="1"/>
</dbReference>
<dbReference type="HAMAP" id="MF_01303">
    <property type="entry name" value="PSI_PsaC"/>
    <property type="match status" value="1"/>
</dbReference>
<dbReference type="InterPro" id="IPR017896">
    <property type="entry name" value="4Fe4S_Fe-S-bd"/>
</dbReference>
<dbReference type="InterPro" id="IPR017900">
    <property type="entry name" value="4Fe4S_Fe_S_CS"/>
</dbReference>
<dbReference type="InterPro" id="IPR050157">
    <property type="entry name" value="PSI_iron-sulfur_center"/>
</dbReference>
<dbReference type="InterPro" id="IPR017491">
    <property type="entry name" value="PSI_PsaC"/>
</dbReference>
<dbReference type="NCBIfam" id="TIGR03048">
    <property type="entry name" value="PS_I_psaC"/>
    <property type="match status" value="1"/>
</dbReference>
<dbReference type="PANTHER" id="PTHR24960:SF79">
    <property type="entry name" value="PHOTOSYSTEM I IRON-SULFUR CENTER"/>
    <property type="match status" value="1"/>
</dbReference>
<dbReference type="PANTHER" id="PTHR24960">
    <property type="entry name" value="PHOTOSYSTEM I IRON-SULFUR CENTER-RELATED"/>
    <property type="match status" value="1"/>
</dbReference>
<dbReference type="Pfam" id="PF14697">
    <property type="entry name" value="Fer4_21"/>
    <property type="match status" value="1"/>
</dbReference>
<dbReference type="SUPFAM" id="SSF54862">
    <property type="entry name" value="4Fe-4S ferredoxins"/>
    <property type="match status" value="1"/>
</dbReference>
<dbReference type="PROSITE" id="PS00198">
    <property type="entry name" value="4FE4S_FER_1"/>
    <property type="match status" value="2"/>
</dbReference>
<dbReference type="PROSITE" id="PS51379">
    <property type="entry name" value="4FE4S_FER_2"/>
    <property type="match status" value="2"/>
</dbReference>
<sequence length="81" mass="8819">MAHSVKIYDTCIGCTQCVRACPTDVLEMISWDGCKANQIASAPRTEDCVGCKRCESACPTDFLSVRVYLGSETTRSMGLAY</sequence>
<feature type="initiator methionine" description="Removed" evidence="1">
    <location>
        <position position="1"/>
    </location>
</feature>
<feature type="chain" id="PRO_0000061968" description="Photosystem I iron-sulfur center">
    <location>
        <begin position="2"/>
        <end position="81"/>
    </location>
</feature>
<feature type="domain" description="4Fe-4S ferredoxin-type 1">
    <location>
        <begin position="2"/>
        <end position="31"/>
    </location>
</feature>
<feature type="domain" description="4Fe-4S ferredoxin-type 2">
    <location>
        <begin position="39"/>
        <end position="68"/>
    </location>
</feature>
<feature type="binding site" evidence="1">
    <location>
        <position position="11"/>
    </location>
    <ligand>
        <name>[4Fe-4S] cluster</name>
        <dbReference type="ChEBI" id="CHEBI:49883"/>
        <label>1</label>
    </ligand>
</feature>
<feature type="binding site" evidence="1">
    <location>
        <position position="14"/>
    </location>
    <ligand>
        <name>[4Fe-4S] cluster</name>
        <dbReference type="ChEBI" id="CHEBI:49883"/>
        <label>1</label>
    </ligand>
</feature>
<feature type="binding site" evidence="1">
    <location>
        <position position="17"/>
    </location>
    <ligand>
        <name>[4Fe-4S] cluster</name>
        <dbReference type="ChEBI" id="CHEBI:49883"/>
        <label>1</label>
    </ligand>
</feature>
<feature type="binding site" evidence="1">
    <location>
        <position position="21"/>
    </location>
    <ligand>
        <name>[4Fe-4S] cluster</name>
        <dbReference type="ChEBI" id="CHEBI:49883"/>
        <label>2</label>
    </ligand>
</feature>
<feature type="binding site" evidence="1">
    <location>
        <position position="48"/>
    </location>
    <ligand>
        <name>[4Fe-4S] cluster</name>
        <dbReference type="ChEBI" id="CHEBI:49883"/>
        <label>2</label>
    </ligand>
</feature>
<feature type="binding site" evidence="1">
    <location>
        <position position="51"/>
    </location>
    <ligand>
        <name>[4Fe-4S] cluster</name>
        <dbReference type="ChEBI" id="CHEBI:49883"/>
        <label>2</label>
    </ligand>
</feature>
<feature type="binding site" evidence="1">
    <location>
        <position position="54"/>
    </location>
    <ligand>
        <name>[4Fe-4S] cluster</name>
        <dbReference type="ChEBI" id="CHEBI:49883"/>
        <label>2</label>
    </ligand>
</feature>
<feature type="binding site" evidence="1">
    <location>
        <position position="58"/>
    </location>
    <ligand>
        <name>[4Fe-4S] cluster</name>
        <dbReference type="ChEBI" id="CHEBI:49883"/>
        <label>1</label>
    </ligand>
</feature>
<keyword id="KW-0004">4Fe-4S</keyword>
<keyword id="KW-0150">Chloroplast</keyword>
<keyword id="KW-0249">Electron transport</keyword>
<keyword id="KW-0408">Iron</keyword>
<keyword id="KW-0411">Iron-sulfur</keyword>
<keyword id="KW-0472">Membrane</keyword>
<keyword id="KW-0479">Metal-binding</keyword>
<keyword id="KW-0560">Oxidoreductase</keyword>
<keyword id="KW-0602">Photosynthesis</keyword>
<keyword id="KW-0603">Photosystem I</keyword>
<keyword id="KW-0934">Plastid</keyword>
<keyword id="KW-0677">Repeat</keyword>
<keyword id="KW-0691">RNA editing</keyword>
<keyword id="KW-0793">Thylakoid</keyword>
<keyword id="KW-0813">Transport</keyword>
<comment type="function">
    <text evidence="1">Apoprotein for the two 4Fe-4S centers FA and FB of photosystem I (PSI); essential for photochemical activity. FB is the terminal electron acceptor of PSI, donating electrons to ferredoxin. The C-terminus interacts with PsaA/B/D and helps assemble the protein into the PSI complex. Required for binding of PsaD and PsaE to PSI. PSI is a plastocyanin-ferredoxin oxidoreductase, converting photonic excitation into a charge separation, which transfers an electron from the donor P700 chlorophyll pair to the spectroscopically characterized acceptors A0, A1, FX, FA and FB in turn (By similarity).</text>
</comment>
<comment type="catalytic activity">
    <reaction>
        <text>reduced [plastocyanin] + hnu + oxidized [2Fe-2S]-[ferredoxin] = oxidized [plastocyanin] + reduced [2Fe-2S]-[ferredoxin]</text>
        <dbReference type="Rhea" id="RHEA:30407"/>
        <dbReference type="Rhea" id="RHEA-COMP:10000"/>
        <dbReference type="Rhea" id="RHEA-COMP:10001"/>
        <dbReference type="Rhea" id="RHEA-COMP:10039"/>
        <dbReference type="Rhea" id="RHEA-COMP:10040"/>
        <dbReference type="ChEBI" id="CHEBI:29036"/>
        <dbReference type="ChEBI" id="CHEBI:30212"/>
        <dbReference type="ChEBI" id="CHEBI:33737"/>
        <dbReference type="ChEBI" id="CHEBI:33738"/>
        <dbReference type="ChEBI" id="CHEBI:49552"/>
        <dbReference type="EC" id="1.97.1.12"/>
    </reaction>
</comment>
<comment type="cofactor">
    <cofactor evidence="1">
        <name>[4Fe-4S] cluster</name>
        <dbReference type="ChEBI" id="CHEBI:49883"/>
    </cofactor>
    <text evidence="1">Binds 2 [4Fe-4S] clusters. Cluster 2 is most probably the spectroscopically characterized electron acceptor FA and cluster 1 is most probably FB.</text>
</comment>
<comment type="subunit">
    <text evidence="1">The eukaryotic PSI reaction center is composed of at least 11 subunits.</text>
</comment>
<comment type="subcellular location">
    <subcellularLocation>
        <location evidence="1">Plastid</location>
        <location evidence="1">Chloroplast thylakoid membrane</location>
        <topology evidence="1">Peripheral membrane protein</topology>
        <orientation evidence="1">Stromal side</orientation>
    </subcellularLocation>
</comment>
<comment type="RNA editing">
    <location>
        <position position="4" evidence="2 3"/>
    </location>
    <location>
        <position position="16" evidence="2 3"/>
    </location>
    <location>
        <position position="22" evidence="2 3"/>
    </location>
    <location>
        <position position="26" evidence="2 3"/>
    </location>
    <location>
        <position position="38" evidence="2 3"/>
    </location>
    <location>
        <position position="59" evidence="2 3"/>
    </location>
    <location>
        <position position="62" evidence="2 3"/>
    </location>
    <text>The nonsense codons at positions 17 and 39 are modified to sense codons.</text>
</comment>
<gene>
    <name type="primary">psaC</name>
</gene>